<gene>
    <name type="primary">CLDN7</name>
    <name type="synonym">CEPTRL2</name>
    <name type="synonym">CPETRL2</name>
</gene>
<feature type="chain" id="PRO_0000144750" description="Claudin-7">
    <location>
        <begin position="1"/>
        <end position="211"/>
    </location>
</feature>
<feature type="topological domain" description="Cytoplasmic" evidence="3">
    <location>
        <begin position="1"/>
        <end position="7"/>
    </location>
</feature>
<feature type="transmembrane region" description="Helical" evidence="3">
    <location>
        <begin position="8"/>
        <end position="28"/>
    </location>
</feature>
<feature type="topological domain" description="Extracellular" evidence="3">
    <location>
        <begin position="29"/>
        <end position="81"/>
    </location>
</feature>
<feature type="transmembrane region" description="Helical" evidence="3">
    <location>
        <begin position="82"/>
        <end position="102"/>
    </location>
</feature>
<feature type="topological domain" description="Cytoplasmic" evidence="3">
    <location>
        <begin position="103"/>
        <end position="117"/>
    </location>
</feature>
<feature type="transmembrane region" description="Helical" evidence="3">
    <location>
        <begin position="118"/>
        <end position="138"/>
    </location>
</feature>
<feature type="topological domain" description="Extracellular" evidence="3">
    <location>
        <begin position="139"/>
        <end position="160"/>
    </location>
</feature>
<feature type="transmembrane region" description="Helical" evidence="3">
    <location>
        <begin position="161"/>
        <end position="181"/>
    </location>
</feature>
<feature type="topological domain" description="Cytoplasmic" evidence="3">
    <location>
        <begin position="182"/>
        <end position="211"/>
    </location>
</feature>
<feature type="region of interest" description="Interactions with TJP1, TJP2 and TJP3" evidence="1">
    <location>
        <begin position="210"/>
        <end position="211"/>
    </location>
</feature>
<feature type="splice variant" id="VSP_013230" description="In isoform 2." evidence="13">
    <location>
        <begin position="159"/>
        <end position="211"/>
    </location>
</feature>
<feature type="sequence variant" id="VAR_030736" description="In dbSNP:rs17849410." evidence="7 11">
    <original>A</original>
    <variation>T</variation>
    <location>
        <position position="133"/>
    </location>
</feature>
<feature type="sequence variant" id="VAR_014538" description="In dbSNP:rs4562." evidence="6 7 10 11 12">
    <original>V</original>
    <variation>A</variation>
    <location>
        <position position="197"/>
    </location>
</feature>
<feature type="mutagenesis site" description="Interacts with CD81, and exhibits HCV infection susceptibility in cell culture." evidence="9">
    <original>M</original>
    <variation>I</variation>
    <location>
        <position position="32"/>
    </location>
</feature>
<feature type="mutagenesis site" description="Interacts with CD81, and exhibits HCV infection susceptibility in cell culture." evidence="9">
    <original>K</original>
    <variation>E</variation>
    <location>
        <position position="48"/>
    </location>
</feature>
<feature type="sequence conflict" description="In Ref. 7; AAP97219." evidence="13" ref="7">
    <original>G</original>
    <variation>R</variation>
    <location>
        <position position="20"/>
    </location>
</feature>
<accession>O95471</accession>
<accession>B2R9X7</accession>
<accession>D3DTP0</accession>
<accession>Q6IPN3</accession>
<accession>Q7Z4Y7</accession>
<accession>Q9BVN0</accession>
<name>CLD7_HUMAN</name>
<keyword id="KW-0025">Alternative splicing</keyword>
<keyword id="KW-0965">Cell junction</keyword>
<keyword id="KW-1003">Cell membrane</keyword>
<keyword id="KW-0472">Membrane</keyword>
<keyword id="KW-0597">Phosphoprotein</keyword>
<keyword id="KW-1267">Proteomics identification</keyword>
<keyword id="KW-1185">Reference proteome</keyword>
<keyword id="KW-0796">Tight junction</keyword>
<keyword id="KW-0812">Transmembrane</keyword>
<keyword id="KW-1133">Transmembrane helix</keyword>
<evidence type="ECO:0000250" key="1"/>
<evidence type="ECO:0000250" key="2">
    <source>
        <dbReference type="UniProtKB" id="Q9Z261"/>
    </source>
</evidence>
<evidence type="ECO:0000255" key="3"/>
<evidence type="ECO:0000269" key="4">
    <source>
    </source>
</evidence>
<evidence type="ECO:0000269" key="5">
    <source>
    </source>
</evidence>
<evidence type="ECO:0000269" key="6">
    <source>
    </source>
</evidence>
<evidence type="ECO:0000269" key="7">
    <source>
    </source>
</evidence>
<evidence type="ECO:0000269" key="8">
    <source>
    </source>
</evidence>
<evidence type="ECO:0000269" key="9">
    <source>
    </source>
</evidence>
<evidence type="ECO:0000269" key="10">
    <source ref="1"/>
</evidence>
<evidence type="ECO:0000269" key="11">
    <source ref="3"/>
</evidence>
<evidence type="ECO:0000269" key="12">
    <source ref="7"/>
</evidence>
<evidence type="ECO:0000305" key="13"/>
<reference key="1">
    <citation type="submission" date="1998-09" db="EMBL/GenBank/DDBJ databases">
        <authorList>
            <person name="Keen T.J."/>
        </authorList>
    </citation>
    <scope>NUCLEOTIDE SEQUENCE [MRNA] (ISOFORM 1)</scope>
    <scope>VARIANT ALA-197</scope>
    <source>
        <tissue>Colon adenocarcinoma</tissue>
    </source>
</reference>
<reference key="2">
    <citation type="journal article" date="2004" name="Nat. Genet.">
        <title>Complete sequencing and characterization of 21,243 full-length human cDNAs.</title>
        <authorList>
            <person name="Ota T."/>
            <person name="Suzuki Y."/>
            <person name="Nishikawa T."/>
            <person name="Otsuki T."/>
            <person name="Sugiyama T."/>
            <person name="Irie R."/>
            <person name="Wakamatsu A."/>
            <person name="Hayashi K."/>
            <person name="Sato H."/>
            <person name="Nagai K."/>
            <person name="Kimura K."/>
            <person name="Makita H."/>
            <person name="Sekine M."/>
            <person name="Obayashi M."/>
            <person name="Nishi T."/>
            <person name="Shibahara T."/>
            <person name="Tanaka T."/>
            <person name="Ishii S."/>
            <person name="Yamamoto J."/>
            <person name="Saito K."/>
            <person name="Kawai Y."/>
            <person name="Isono Y."/>
            <person name="Nakamura Y."/>
            <person name="Nagahari K."/>
            <person name="Murakami K."/>
            <person name="Yasuda T."/>
            <person name="Iwayanagi T."/>
            <person name="Wagatsuma M."/>
            <person name="Shiratori A."/>
            <person name="Sudo H."/>
            <person name="Hosoiri T."/>
            <person name="Kaku Y."/>
            <person name="Kodaira H."/>
            <person name="Kondo H."/>
            <person name="Sugawara M."/>
            <person name="Takahashi M."/>
            <person name="Kanda K."/>
            <person name="Yokoi T."/>
            <person name="Furuya T."/>
            <person name="Kikkawa E."/>
            <person name="Omura Y."/>
            <person name="Abe K."/>
            <person name="Kamihara K."/>
            <person name="Katsuta N."/>
            <person name="Sato K."/>
            <person name="Tanikawa M."/>
            <person name="Yamazaki M."/>
            <person name="Ninomiya K."/>
            <person name="Ishibashi T."/>
            <person name="Yamashita H."/>
            <person name="Murakawa K."/>
            <person name="Fujimori K."/>
            <person name="Tanai H."/>
            <person name="Kimata M."/>
            <person name="Watanabe M."/>
            <person name="Hiraoka S."/>
            <person name="Chiba Y."/>
            <person name="Ishida S."/>
            <person name="Ono Y."/>
            <person name="Takiguchi S."/>
            <person name="Watanabe S."/>
            <person name="Yosida M."/>
            <person name="Hotuta T."/>
            <person name="Kusano J."/>
            <person name="Kanehori K."/>
            <person name="Takahashi-Fujii A."/>
            <person name="Hara H."/>
            <person name="Tanase T.-O."/>
            <person name="Nomura Y."/>
            <person name="Togiya S."/>
            <person name="Komai F."/>
            <person name="Hara R."/>
            <person name="Takeuchi K."/>
            <person name="Arita M."/>
            <person name="Imose N."/>
            <person name="Musashino K."/>
            <person name="Yuuki H."/>
            <person name="Oshima A."/>
            <person name="Sasaki N."/>
            <person name="Aotsuka S."/>
            <person name="Yoshikawa Y."/>
            <person name="Matsunawa H."/>
            <person name="Ichihara T."/>
            <person name="Shiohata N."/>
            <person name="Sano S."/>
            <person name="Moriya S."/>
            <person name="Momiyama H."/>
            <person name="Satoh N."/>
            <person name="Takami S."/>
            <person name="Terashima Y."/>
            <person name="Suzuki O."/>
            <person name="Nakagawa S."/>
            <person name="Senoh A."/>
            <person name="Mizoguchi H."/>
            <person name="Goto Y."/>
            <person name="Shimizu F."/>
            <person name="Wakebe H."/>
            <person name="Hishigaki H."/>
            <person name="Watanabe T."/>
            <person name="Sugiyama A."/>
            <person name="Takemoto M."/>
            <person name="Kawakami B."/>
            <person name="Yamazaki M."/>
            <person name="Watanabe K."/>
            <person name="Kumagai A."/>
            <person name="Itakura S."/>
            <person name="Fukuzumi Y."/>
            <person name="Fujimori Y."/>
            <person name="Komiyama M."/>
            <person name="Tashiro H."/>
            <person name="Tanigami A."/>
            <person name="Fujiwara T."/>
            <person name="Ono T."/>
            <person name="Yamada K."/>
            <person name="Fujii Y."/>
            <person name="Ozaki K."/>
            <person name="Hirao M."/>
            <person name="Ohmori Y."/>
            <person name="Kawabata A."/>
            <person name="Hikiji T."/>
            <person name="Kobatake N."/>
            <person name="Inagaki H."/>
            <person name="Ikema Y."/>
            <person name="Okamoto S."/>
            <person name="Okitani R."/>
            <person name="Kawakami T."/>
            <person name="Noguchi S."/>
            <person name="Itoh T."/>
            <person name="Shigeta K."/>
            <person name="Senba T."/>
            <person name="Matsumura K."/>
            <person name="Nakajima Y."/>
            <person name="Mizuno T."/>
            <person name="Morinaga M."/>
            <person name="Sasaki M."/>
            <person name="Togashi T."/>
            <person name="Oyama M."/>
            <person name="Hata H."/>
            <person name="Watanabe M."/>
            <person name="Komatsu T."/>
            <person name="Mizushima-Sugano J."/>
            <person name="Satoh T."/>
            <person name="Shirai Y."/>
            <person name="Takahashi Y."/>
            <person name="Nakagawa K."/>
            <person name="Okumura K."/>
            <person name="Nagase T."/>
            <person name="Nomura N."/>
            <person name="Kikuchi H."/>
            <person name="Masuho Y."/>
            <person name="Yamashita R."/>
            <person name="Nakai K."/>
            <person name="Yada T."/>
            <person name="Nakamura Y."/>
            <person name="Ohara O."/>
            <person name="Isogai T."/>
            <person name="Sugano S."/>
        </authorList>
    </citation>
    <scope>NUCLEOTIDE SEQUENCE [LARGE SCALE MRNA] (ISOFORM 1)</scope>
    <scope>VARIANT ALA-197</scope>
    <source>
        <tissue>Colon</tissue>
    </source>
</reference>
<reference key="3">
    <citation type="submission" date="2003-05" db="EMBL/GenBank/DDBJ databases">
        <title>Cloning of human full-length CDSs in BD Creator(TM) system donor vector.</title>
        <authorList>
            <person name="Kalnine N."/>
            <person name="Chen X."/>
            <person name="Rolfs A."/>
            <person name="Halleck A."/>
            <person name="Hines L."/>
            <person name="Eisenstein S."/>
            <person name="Koundinya M."/>
            <person name="Raphael J."/>
            <person name="Moreira D."/>
            <person name="Kelley T."/>
            <person name="LaBaer J."/>
            <person name="Lin Y."/>
            <person name="Phelan M."/>
            <person name="Farmer A."/>
        </authorList>
    </citation>
    <scope>NUCLEOTIDE SEQUENCE [LARGE SCALE MRNA] (ISOFORM 1)</scope>
    <scope>VARIANTS THR-133 AND ALA-197</scope>
</reference>
<reference key="4">
    <citation type="journal article" date="2006" name="Nature">
        <title>DNA sequence of human chromosome 17 and analysis of rearrangement in the human lineage.</title>
        <authorList>
            <person name="Zody M.C."/>
            <person name="Garber M."/>
            <person name="Adams D.J."/>
            <person name="Sharpe T."/>
            <person name="Harrow J."/>
            <person name="Lupski J.R."/>
            <person name="Nicholson C."/>
            <person name="Searle S.M."/>
            <person name="Wilming L."/>
            <person name="Young S.K."/>
            <person name="Abouelleil A."/>
            <person name="Allen N.R."/>
            <person name="Bi W."/>
            <person name="Bloom T."/>
            <person name="Borowsky M.L."/>
            <person name="Bugalter B.E."/>
            <person name="Butler J."/>
            <person name="Chang J.L."/>
            <person name="Chen C.-K."/>
            <person name="Cook A."/>
            <person name="Corum B."/>
            <person name="Cuomo C.A."/>
            <person name="de Jong P.J."/>
            <person name="DeCaprio D."/>
            <person name="Dewar K."/>
            <person name="FitzGerald M."/>
            <person name="Gilbert J."/>
            <person name="Gibson R."/>
            <person name="Gnerre S."/>
            <person name="Goldstein S."/>
            <person name="Grafham D.V."/>
            <person name="Grocock R."/>
            <person name="Hafez N."/>
            <person name="Hagopian D.S."/>
            <person name="Hart E."/>
            <person name="Norman C.H."/>
            <person name="Humphray S."/>
            <person name="Jaffe D.B."/>
            <person name="Jones M."/>
            <person name="Kamal M."/>
            <person name="Khodiyar V.K."/>
            <person name="LaButti K."/>
            <person name="Laird G."/>
            <person name="Lehoczky J."/>
            <person name="Liu X."/>
            <person name="Lokyitsang T."/>
            <person name="Loveland J."/>
            <person name="Lui A."/>
            <person name="Macdonald P."/>
            <person name="Major J.E."/>
            <person name="Matthews L."/>
            <person name="Mauceli E."/>
            <person name="McCarroll S.A."/>
            <person name="Mihalev A.H."/>
            <person name="Mudge J."/>
            <person name="Nguyen C."/>
            <person name="Nicol R."/>
            <person name="O'Leary S.B."/>
            <person name="Osoegawa K."/>
            <person name="Schwartz D.C."/>
            <person name="Shaw-Smith C."/>
            <person name="Stankiewicz P."/>
            <person name="Steward C."/>
            <person name="Swarbreck D."/>
            <person name="Venkataraman V."/>
            <person name="Whittaker C.A."/>
            <person name="Yang X."/>
            <person name="Zimmer A.R."/>
            <person name="Bradley A."/>
            <person name="Hubbard T."/>
            <person name="Birren B.W."/>
            <person name="Rogers J."/>
            <person name="Lander E.S."/>
            <person name="Nusbaum C."/>
        </authorList>
    </citation>
    <scope>NUCLEOTIDE SEQUENCE [LARGE SCALE GENOMIC DNA]</scope>
</reference>
<reference key="5">
    <citation type="submission" date="2005-09" db="EMBL/GenBank/DDBJ databases">
        <authorList>
            <person name="Mural R.J."/>
            <person name="Istrail S."/>
            <person name="Sutton G.G."/>
            <person name="Florea L."/>
            <person name="Halpern A.L."/>
            <person name="Mobarry C.M."/>
            <person name="Lippert R."/>
            <person name="Walenz B."/>
            <person name="Shatkay H."/>
            <person name="Dew I."/>
            <person name="Miller J.R."/>
            <person name="Flanigan M.J."/>
            <person name="Edwards N.J."/>
            <person name="Bolanos R."/>
            <person name="Fasulo D."/>
            <person name="Halldorsson B.V."/>
            <person name="Hannenhalli S."/>
            <person name="Turner R."/>
            <person name="Yooseph S."/>
            <person name="Lu F."/>
            <person name="Nusskern D.R."/>
            <person name="Shue B.C."/>
            <person name="Zheng X.H."/>
            <person name="Zhong F."/>
            <person name="Delcher A.L."/>
            <person name="Huson D.H."/>
            <person name="Kravitz S.A."/>
            <person name="Mouchard L."/>
            <person name="Reinert K."/>
            <person name="Remington K.A."/>
            <person name="Clark A.G."/>
            <person name="Waterman M.S."/>
            <person name="Eichler E.E."/>
            <person name="Adams M.D."/>
            <person name="Hunkapiller M.W."/>
            <person name="Myers E.W."/>
            <person name="Venter J.C."/>
        </authorList>
    </citation>
    <scope>NUCLEOTIDE SEQUENCE [LARGE SCALE GENOMIC DNA]</scope>
</reference>
<reference key="6">
    <citation type="journal article" date="2004" name="Genome Res.">
        <title>The status, quality, and expansion of the NIH full-length cDNA project: the Mammalian Gene Collection (MGC).</title>
        <authorList>
            <consortium name="The MGC Project Team"/>
        </authorList>
    </citation>
    <scope>NUCLEOTIDE SEQUENCE [LARGE SCALE MRNA] (ISOFORM 1)</scope>
    <scope>VARIANTS THR-133 AND ALA-197</scope>
    <source>
        <tissue>Mammary gland</tissue>
        <tissue>Placenta</tissue>
    </source>
</reference>
<reference key="7">
    <citation type="submission" date="2003-07" db="EMBL/GenBank/DDBJ databases">
        <title>Cloning and expression of a novel human cDNA homology to murine claudin-1 mRNA.</title>
        <authorList>
            <person name="Yue P."/>
            <person name="Yu L."/>
            <person name="Bi A.D."/>
            <person name="Zhang M."/>
            <person name="He H."/>
            <person name="Zhao S.Y."/>
        </authorList>
    </citation>
    <scope>NUCLEOTIDE SEQUENCE [MRNA] OF 13-211 (ISOFORM 1)</scope>
    <scope>VARIANT ALA-197</scope>
</reference>
<reference key="8">
    <citation type="journal article" date="2003" name="J. Membr. Biol.">
        <title>Regulation of the expression of the prostate-specific antigen by claudin-7.</title>
        <authorList>
            <person name="Zheng J.-Y."/>
            <person name="Yu D."/>
            <person name="Foroohar M."/>
            <person name="Ko E."/>
            <person name="Chan J."/>
            <person name="Kim N."/>
            <person name="Chiu R."/>
            <person name="Pang S."/>
        </authorList>
    </citation>
    <scope>ALTERNATIVE SPLICING</scope>
    <scope>SUBCELLULAR LOCATION</scope>
    <scope>INDUCTION</scope>
    <scope>TISSUE SPECIFICITY</scope>
</reference>
<reference key="9">
    <citation type="journal article" date="2003" name="Oncogene">
        <title>Loss of the tight junction protein claudin-7 correlates with histological grade in both ductal carcinoma in situ and invasive ductal carcinoma of the breast.</title>
        <authorList>
            <person name="Kominsky S.L."/>
            <person name="Argani P."/>
            <person name="Korz D."/>
            <person name="Evron E."/>
            <person name="Raman V."/>
            <person name="Garrett E."/>
            <person name="Rein A."/>
            <person name="Sauter G."/>
            <person name="Kallioniemi O.-P."/>
            <person name="Sukumar S."/>
        </authorList>
    </citation>
    <scope>SUBCELLULAR LOCATION</scope>
    <scope>TISSUE SPECIFICITY</scope>
</reference>
<reference key="10">
    <citation type="journal article" date="2005" name="Exp. Cell Res.">
        <title>The cell-cell adhesion molecule EpCAM interacts directly with the tight junction protein claudin-7.</title>
        <authorList>
            <person name="Ladwein M."/>
            <person name="Pape U.F."/>
            <person name="Schmidt D.S."/>
            <person name="Schnoelzer M."/>
            <person name="Fiedler S."/>
            <person name="Langbein L."/>
            <person name="Franke W.W."/>
            <person name="Moldenhauer G."/>
            <person name="Zoeller M."/>
        </authorList>
    </citation>
    <scope>SUBCELLULAR LOCATION</scope>
    <scope>PHOSPHORYLATION</scope>
    <scope>INTERACTION WITH EPCAM</scope>
</reference>
<reference key="11">
    <citation type="journal article" date="2010" name="J. Biol. Chem.">
        <title>Claudin association with CD81 defines hepatitis C virus entry.</title>
        <authorList>
            <person name="Harris H.J."/>
            <person name="Davis C."/>
            <person name="Mullins J.G."/>
            <person name="Hu K."/>
            <person name="Goodall M."/>
            <person name="Farquhar M.J."/>
            <person name="Mee C.J."/>
            <person name="McCaffrey K."/>
            <person name="Young S."/>
            <person name="Drummer H."/>
            <person name="Balfe P."/>
            <person name="McKeating J.A."/>
        </authorList>
    </citation>
    <scope>SUBCELLULAR LOCATION</scope>
    <scope>MUTAGENESIS OF MET-32 AND LYS-48</scope>
    <scope>ABSENCE OF INTERACTION WITH CD81</scope>
</reference>
<dbReference type="EMBL" id="AJ011497">
    <property type="protein sequence ID" value="CAA09626.1"/>
    <property type="molecule type" value="mRNA"/>
</dbReference>
<dbReference type="EMBL" id="AK313958">
    <property type="protein sequence ID" value="BAG36674.1"/>
    <property type="molecule type" value="mRNA"/>
</dbReference>
<dbReference type="EMBL" id="BT006829">
    <property type="protein sequence ID" value="AAP35475.1"/>
    <property type="molecule type" value="mRNA"/>
</dbReference>
<dbReference type="EMBL" id="AC003688">
    <property type="status" value="NOT_ANNOTATED_CDS"/>
    <property type="molecule type" value="Genomic_DNA"/>
</dbReference>
<dbReference type="EMBL" id="CH471108">
    <property type="protein sequence ID" value="EAW90228.1"/>
    <property type="molecule type" value="Genomic_DNA"/>
</dbReference>
<dbReference type="EMBL" id="CH471108">
    <property type="protein sequence ID" value="EAW90229.1"/>
    <property type="molecule type" value="Genomic_DNA"/>
</dbReference>
<dbReference type="EMBL" id="BC001055">
    <property type="protein sequence ID" value="AAH01055.1"/>
    <property type="molecule type" value="mRNA"/>
</dbReference>
<dbReference type="EMBL" id="BC071844">
    <property type="protein sequence ID" value="AAH71844.1"/>
    <property type="molecule type" value="mRNA"/>
</dbReference>
<dbReference type="EMBL" id="AF093823">
    <property type="protein sequence ID" value="AAP97219.1"/>
    <property type="status" value="ALT_FRAME"/>
    <property type="molecule type" value="mRNA"/>
</dbReference>
<dbReference type="CCDS" id="CCDS11096.1">
    <molecule id="O95471-1"/>
</dbReference>
<dbReference type="RefSeq" id="NP_001171951.1">
    <molecule id="O95471-1"/>
    <property type="nucleotide sequence ID" value="NM_001185022.2"/>
</dbReference>
<dbReference type="RefSeq" id="NP_001171952.1">
    <property type="nucleotide sequence ID" value="NM_001185023.1"/>
</dbReference>
<dbReference type="RefSeq" id="NP_001298.3">
    <molecule id="O95471-1"/>
    <property type="nucleotide sequence ID" value="NM_001307.5"/>
</dbReference>
<dbReference type="SMR" id="O95471"/>
<dbReference type="BioGRID" id="107758">
    <property type="interactions" value="84"/>
</dbReference>
<dbReference type="CORUM" id="O95471"/>
<dbReference type="FunCoup" id="O95471">
    <property type="interactions" value="368"/>
</dbReference>
<dbReference type="IntAct" id="O95471">
    <property type="interactions" value="78"/>
</dbReference>
<dbReference type="MINT" id="O95471"/>
<dbReference type="STRING" id="9606.ENSP00000353475"/>
<dbReference type="TCDB" id="1.H.1.1.2">
    <property type="family name" value="the claudin tight junction (claudin1) family"/>
</dbReference>
<dbReference type="iPTMnet" id="O95471"/>
<dbReference type="PhosphoSitePlus" id="O95471"/>
<dbReference type="SwissPalm" id="O95471"/>
<dbReference type="BioMuta" id="CLDN7"/>
<dbReference type="jPOST" id="O95471"/>
<dbReference type="MassIVE" id="O95471"/>
<dbReference type="PaxDb" id="9606-ENSP00000353475"/>
<dbReference type="PeptideAtlas" id="O95471"/>
<dbReference type="ProteomicsDB" id="50903">
    <molecule id="O95471-1"/>
</dbReference>
<dbReference type="ProteomicsDB" id="50904">
    <molecule id="O95471-2"/>
</dbReference>
<dbReference type="Antibodypedia" id="4583">
    <property type="antibodies" value="514 antibodies from 37 providers"/>
</dbReference>
<dbReference type="DNASU" id="1366"/>
<dbReference type="Ensembl" id="ENST00000360325.11">
    <molecule id="O95471-1"/>
    <property type="protein sequence ID" value="ENSP00000353475.7"/>
    <property type="gene ID" value="ENSG00000181885.18"/>
</dbReference>
<dbReference type="Ensembl" id="ENST00000397317.8">
    <molecule id="O95471-1"/>
    <property type="protein sequence ID" value="ENSP00000396638.3"/>
    <property type="gene ID" value="ENSG00000181885.18"/>
</dbReference>
<dbReference type="Ensembl" id="ENST00000672374.1">
    <molecule id="O95471-1"/>
    <property type="protein sequence ID" value="ENSP00000500460.1"/>
    <property type="gene ID" value="ENSG00000288292.1"/>
</dbReference>
<dbReference type="Ensembl" id="ENST00000672443.1">
    <molecule id="O95471-1"/>
    <property type="protein sequence ID" value="ENSP00000500298.1"/>
    <property type="gene ID" value="ENSG00000288292.1"/>
</dbReference>
<dbReference type="GeneID" id="1366"/>
<dbReference type="KEGG" id="hsa:1366"/>
<dbReference type="MANE-Select" id="ENST00000360325.11">
    <property type="protein sequence ID" value="ENSP00000353475.7"/>
    <property type="RefSeq nucleotide sequence ID" value="NM_001307.6"/>
    <property type="RefSeq protein sequence ID" value="NP_001298.3"/>
</dbReference>
<dbReference type="UCSC" id="uc002gfm.5">
    <molecule id="O95471-1"/>
    <property type="organism name" value="human"/>
</dbReference>
<dbReference type="AGR" id="HGNC:2049"/>
<dbReference type="CTD" id="1366"/>
<dbReference type="DisGeNET" id="1366"/>
<dbReference type="GeneCards" id="CLDN7"/>
<dbReference type="HGNC" id="HGNC:2049">
    <property type="gene designation" value="CLDN7"/>
</dbReference>
<dbReference type="HPA" id="ENSG00000181885">
    <property type="expression patterns" value="Tissue enhanced (esophagus, intestine)"/>
</dbReference>
<dbReference type="MIM" id="609131">
    <property type="type" value="gene"/>
</dbReference>
<dbReference type="neXtProt" id="NX_O95471"/>
<dbReference type="OpenTargets" id="ENSG00000181885"/>
<dbReference type="PharmGKB" id="PA26575"/>
<dbReference type="VEuPathDB" id="HostDB:ENSG00000181885"/>
<dbReference type="eggNOG" id="ENOG502QPXX">
    <property type="taxonomic scope" value="Eukaryota"/>
</dbReference>
<dbReference type="GeneTree" id="ENSGT00940000160672"/>
<dbReference type="InParanoid" id="O95471"/>
<dbReference type="OMA" id="ACAWCTH"/>
<dbReference type="OrthoDB" id="10025519at2759"/>
<dbReference type="PAN-GO" id="O95471">
    <property type="GO annotations" value="4 GO annotations based on evolutionary models"/>
</dbReference>
<dbReference type="PhylomeDB" id="O95471"/>
<dbReference type="TreeFam" id="TF331936"/>
<dbReference type="PathwayCommons" id="O95471"/>
<dbReference type="Reactome" id="R-HSA-420029">
    <property type="pathway name" value="Tight junction interactions"/>
</dbReference>
<dbReference type="SignaLink" id="O95471"/>
<dbReference type="SIGNOR" id="O95471"/>
<dbReference type="BioGRID-ORCS" id="1366">
    <property type="hits" value="10 hits in 1148 CRISPR screens"/>
</dbReference>
<dbReference type="ChiTaRS" id="CLDN7">
    <property type="organism name" value="human"/>
</dbReference>
<dbReference type="GeneWiki" id="CLDN7"/>
<dbReference type="GenomeRNAi" id="1366"/>
<dbReference type="Pharos" id="O95471">
    <property type="development level" value="Tbio"/>
</dbReference>
<dbReference type="PRO" id="PR:O95471"/>
<dbReference type="Proteomes" id="UP000005640">
    <property type="component" value="Chromosome 17"/>
</dbReference>
<dbReference type="RNAct" id="O95471">
    <property type="molecule type" value="protein"/>
</dbReference>
<dbReference type="Bgee" id="ENSG00000181885">
    <property type="expression patterns" value="Expressed in mucosa of transverse colon and 94 other cell types or tissues"/>
</dbReference>
<dbReference type="ExpressionAtlas" id="O95471">
    <property type="expression patterns" value="baseline and differential"/>
</dbReference>
<dbReference type="GO" id="GO:0016327">
    <property type="term" value="C:apicolateral plasma membrane"/>
    <property type="evidence" value="ECO:0007669"/>
    <property type="project" value="Ensembl"/>
</dbReference>
<dbReference type="GO" id="GO:0016323">
    <property type="term" value="C:basolateral plasma membrane"/>
    <property type="evidence" value="ECO:0007669"/>
    <property type="project" value="UniProtKB-SubCell"/>
</dbReference>
<dbReference type="GO" id="GO:0005923">
    <property type="term" value="C:bicellular tight junction"/>
    <property type="evidence" value="ECO:0000250"/>
    <property type="project" value="UniProtKB"/>
</dbReference>
<dbReference type="GO" id="GO:0016328">
    <property type="term" value="C:lateral plasma membrane"/>
    <property type="evidence" value="ECO:0007669"/>
    <property type="project" value="Ensembl"/>
</dbReference>
<dbReference type="GO" id="GO:0005886">
    <property type="term" value="C:plasma membrane"/>
    <property type="evidence" value="ECO:0000314"/>
    <property type="project" value="UniProtKB"/>
</dbReference>
<dbReference type="GO" id="GO:0042802">
    <property type="term" value="F:identical protein binding"/>
    <property type="evidence" value="ECO:0000250"/>
    <property type="project" value="UniProtKB"/>
</dbReference>
<dbReference type="GO" id="GO:0005198">
    <property type="term" value="F:structural molecule activity"/>
    <property type="evidence" value="ECO:0007669"/>
    <property type="project" value="InterPro"/>
</dbReference>
<dbReference type="GO" id="GO:0070830">
    <property type="term" value="P:bicellular tight junction assembly"/>
    <property type="evidence" value="ECO:0000318"/>
    <property type="project" value="GO_Central"/>
</dbReference>
<dbReference type="GO" id="GO:0016338">
    <property type="term" value="P:calcium-independent cell-cell adhesion via plasma membrane cell-adhesion molecules"/>
    <property type="evidence" value="ECO:0000250"/>
    <property type="project" value="UniProtKB"/>
</dbReference>
<dbReference type="GO" id="GO:0007155">
    <property type="term" value="P:cell adhesion"/>
    <property type="evidence" value="ECO:0000318"/>
    <property type="project" value="GO_Central"/>
</dbReference>
<dbReference type="FunFam" id="1.20.140.150:FF:000001">
    <property type="entry name" value="Claudin"/>
    <property type="match status" value="1"/>
</dbReference>
<dbReference type="Gene3D" id="1.20.140.150">
    <property type="match status" value="1"/>
</dbReference>
<dbReference type="InterPro" id="IPR006187">
    <property type="entry name" value="Claudin"/>
</dbReference>
<dbReference type="InterPro" id="IPR003552">
    <property type="entry name" value="Claudin7"/>
</dbReference>
<dbReference type="InterPro" id="IPR017974">
    <property type="entry name" value="Claudin_CS"/>
</dbReference>
<dbReference type="InterPro" id="IPR004031">
    <property type="entry name" value="PMP22/EMP/MP20/Claudin"/>
</dbReference>
<dbReference type="PANTHER" id="PTHR12002">
    <property type="entry name" value="CLAUDIN"/>
    <property type="match status" value="1"/>
</dbReference>
<dbReference type="Pfam" id="PF00822">
    <property type="entry name" value="PMP22_Claudin"/>
    <property type="match status" value="1"/>
</dbReference>
<dbReference type="PRINTS" id="PR01077">
    <property type="entry name" value="CLAUDIN"/>
</dbReference>
<dbReference type="PRINTS" id="PR01381">
    <property type="entry name" value="CLAUDIN7"/>
</dbReference>
<dbReference type="PROSITE" id="PS01346">
    <property type="entry name" value="CLAUDIN"/>
    <property type="match status" value="1"/>
</dbReference>
<sequence>MANSGLQLLGFSMALLGWVGLVACTAIPQWQMSSYAGDNIITAQAMYKGLWMDCVTQSTGMMSCKMYDSVLALSAALQATRALMVVSLVLGFLAMFVATMGMKCTRCGGDDKVKKARIAMGGGIIFIVAGLAALVACSWYGHQIVTDFYNPLIPTNIKYEFGPAIFIGWAGSALVILGGALLSCSCPGNESKAGYRVPRSYPKSNSSKEYV</sequence>
<proteinExistence type="evidence at protein level"/>
<organism>
    <name type="scientific">Homo sapiens</name>
    <name type="common">Human</name>
    <dbReference type="NCBI Taxonomy" id="9606"/>
    <lineage>
        <taxon>Eukaryota</taxon>
        <taxon>Metazoa</taxon>
        <taxon>Chordata</taxon>
        <taxon>Craniata</taxon>
        <taxon>Vertebrata</taxon>
        <taxon>Euteleostomi</taxon>
        <taxon>Mammalia</taxon>
        <taxon>Eutheria</taxon>
        <taxon>Euarchontoglires</taxon>
        <taxon>Primates</taxon>
        <taxon>Haplorrhini</taxon>
        <taxon>Catarrhini</taxon>
        <taxon>Hominidae</taxon>
        <taxon>Homo</taxon>
    </lineage>
</organism>
<comment type="function">
    <text evidence="1">Plays a major role in tight junction-specific obliteration of the intercellular space.</text>
</comment>
<comment type="subunit">
    <text evidence="2 8 9">Directly interacts with TJP1/ZO-1, TJP2/ZO-2 and TJP3/ZO-3 (By similarity). The phosphorylated form interacts with EPCAM (PubMed:16054130). Does not interact with CD81 (PubMed:20375010).</text>
</comment>
<comment type="interaction">
    <interactant intactId="EBI-740744">
        <id>O95471</id>
    </interactant>
    <interactant intactId="EBI-11957045">
        <id>Q9NVV5-2</id>
        <label>AIG1</label>
    </interactant>
    <organismsDiffer>false</organismsDiffer>
    <experiments>3</experiments>
</comment>
<comment type="interaction">
    <interactant intactId="EBI-740744">
        <id>O95471</id>
    </interactant>
    <interactant intactId="EBI-12109402">
        <id>Q86W74-2</id>
        <label>ANKRD46</label>
    </interactant>
    <organismsDiffer>false</organismsDiffer>
    <experiments>3</experiments>
</comment>
<comment type="interaction">
    <interactant intactId="EBI-740744">
        <id>O95471</id>
    </interactant>
    <interactant intactId="EBI-715495">
        <id>P05090</id>
        <label>APOD</label>
    </interactant>
    <organismsDiffer>false</organismsDiffer>
    <experiments>3</experiments>
</comment>
<comment type="interaction">
    <interactant intactId="EBI-740744">
        <id>O95471</id>
    </interactant>
    <interactant intactId="EBI-1172335">
        <id>P07306</id>
        <label>ASGR1</label>
    </interactant>
    <organismsDiffer>false</organismsDiffer>
    <experiments>3</experiments>
</comment>
<comment type="interaction">
    <interactant intactId="EBI-740744">
        <id>O95471</id>
    </interactant>
    <interactant intactId="EBI-707714">
        <id>Q92843</id>
        <label>BCL2L2</label>
    </interactant>
    <organismsDiffer>false</organismsDiffer>
    <experiments>3</experiments>
</comment>
<comment type="interaction">
    <interactant intactId="EBI-740744">
        <id>O95471</id>
    </interactant>
    <interactant intactId="EBI-749204">
        <id>O15155</id>
        <label>BET1</label>
    </interactant>
    <organismsDiffer>false</organismsDiffer>
    <experiments>3</experiments>
</comment>
<comment type="interaction">
    <interactant intactId="EBI-740744">
        <id>O95471</id>
    </interactant>
    <interactant intactId="EBI-3922513">
        <id>O95393</id>
        <label>BMP10</label>
    </interactant>
    <organismsDiffer>false</organismsDiffer>
    <experiments>3</experiments>
</comment>
<comment type="interaction">
    <interactant intactId="EBI-740744">
        <id>O95471</id>
    </interactant>
    <interactant intactId="EBI-6657396">
        <id>P19397</id>
        <label>CD53</label>
    </interactant>
    <organismsDiffer>false</organismsDiffer>
    <experiments>3</experiments>
</comment>
<comment type="interaction">
    <interactant intactId="EBI-740744">
        <id>O95471</id>
    </interactant>
    <interactant intactId="EBI-307924">
        <id>P21854</id>
        <label>CD72</label>
    </interactant>
    <organismsDiffer>false</organismsDiffer>
    <experiments>3</experiments>
</comment>
<comment type="interaction">
    <interactant intactId="EBI-740744">
        <id>O95471</id>
    </interactant>
    <interactant intactId="EBI-6165897">
        <id>Q9NWW5</id>
        <label>CLN6</label>
    </interactant>
    <organismsDiffer>false</organismsDiffer>
    <experiments>3</experiments>
</comment>
<comment type="interaction">
    <interactant intactId="EBI-740744">
        <id>O95471</id>
    </interactant>
    <interactant intactId="EBI-11522780">
        <id>Q96DZ9-2</id>
        <label>CMTM5</label>
    </interactant>
    <organismsDiffer>false</organismsDiffer>
    <experiments>3</experiments>
</comment>
<comment type="interaction">
    <interactant intactId="EBI-740744">
        <id>O95471</id>
    </interactant>
    <interactant intactId="EBI-12172273">
        <id>O95406</id>
        <label>CNIH1</label>
    </interactant>
    <organismsDiffer>false</organismsDiffer>
    <experiments>3</experiments>
</comment>
<comment type="interaction">
    <interactant intactId="EBI-740744">
        <id>O95471</id>
    </interactant>
    <interactant intactId="EBI-12211159">
        <id>P29400-2</id>
        <label>COL4A5</label>
    </interactant>
    <organismsDiffer>false</organismsDiffer>
    <experiments>3</experiments>
</comment>
<comment type="interaction">
    <interactant intactId="EBI-740744">
        <id>O95471</id>
    </interactant>
    <interactant intactId="EBI-3911467">
        <id>Q07325</id>
        <label>CXCL9</label>
    </interactant>
    <organismsDiffer>false</organismsDiffer>
    <experiments>3</experiments>
</comment>
<comment type="interaction">
    <interactant intactId="EBI-740744">
        <id>O95471</id>
    </interactant>
    <interactant intactId="EBI-10269179">
        <id>Q8NBI2</id>
        <label>CYB561A3</label>
    </interactant>
    <organismsDiffer>false</organismsDiffer>
    <experiments>3</experiments>
</comment>
<comment type="interaction">
    <interactant intactId="EBI-740744">
        <id>O95471</id>
    </interactant>
    <interactant intactId="EBI-717654">
        <id>O14569</id>
        <label>CYB561D2</label>
    </interactant>
    <organismsDiffer>false</organismsDiffer>
    <experiments>3</experiments>
</comment>
<comment type="interaction">
    <interactant intactId="EBI-740744">
        <id>O95471</id>
    </interactant>
    <interactant intactId="EBI-1058710">
        <id>O43169</id>
        <label>CYB5B</label>
    </interactant>
    <organismsDiffer>false</organismsDiffer>
    <experiments>3</experiments>
</comment>
<comment type="interaction">
    <interactant intactId="EBI-740744">
        <id>O95471</id>
    </interactant>
    <interactant intactId="EBI-2680384">
        <id>Q9BQA9</id>
        <label>CYBC1</label>
    </interactant>
    <organismsDiffer>false</organismsDiffer>
    <experiments>3</experiments>
</comment>
<comment type="interaction">
    <interactant intactId="EBI-740744">
        <id>O95471</id>
    </interactant>
    <interactant intactId="EBI-10215665">
        <id>P56851</id>
        <label>EDDM3B</label>
    </interactant>
    <organismsDiffer>false</organismsDiffer>
    <experiments>3</experiments>
</comment>
<comment type="interaction">
    <interactant intactId="EBI-740744">
        <id>O95471</id>
    </interactant>
    <interactant intactId="EBI-3907816">
        <id>P54852</id>
        <label>EMP3</label>
    </interactant>
    <organismsDiffer>false</organismsDiffer>
    <experiments>3</experiments>
</comment>
<comment type="interaction">
    <interactant intactId="EBI-740744">
        <id>O95471</id>
    </interactant>
    <interactant intactId="EBI-711490">
        <id>Q9UKR5</id>
        <label>ERG28</label>
    </interactant>
    <organismsDiffer>false</organismsDiffer>
    <experiments>3</experiments>
</comment>
<comment type="interaction">
    <interactant intactId="EBI-740744">
        <id>O95471</id>
    </interactant>
    <interactant intactId="EBI-10976398">
        <id>Q7Z2K6</id>
        <label>ERMP1</label>
    </interactant>
    <organismsDiffer>false</organismsDiffer>
    <experiments>3</experiments>
</comment>
<comment type="interaction">
    <interactant intactId="EBI-740744">
        <id>O95471</id>
    </interactant>
    <interactant intactId="EBI-12142299">
        <id>Q96IV6</id>
        <label>FAXDC2</label>
    </interactant>
    <organismsDiffer>false</organismsDiffer>
    <experiments>3</experiments>
</comment>
<comment type="interaction">
    <interactant intactId="EBI-740744">
        <id>O95471</id>
    </interactant>
    <interactant intactId="EBI-713304">
        <id>Q9H0Q3</id>
        <label>FXYD6</label>
    </interactant>
    <organismsDiffer>false</organismsDiffer>
    <experiments>3</experiments>
</comment>
<comment type="interaction">
    <interactant intactId="EBI-740744">
        <id>O95471</id>
    </interactant>
    <interactant intactId="EBI-6166686">
        <id>Q96F15</id>
        <label>GIMAP5</label>
    </interactant>
    <organismsDiffer>false</organismsDiffer>
    <experiments>3</experiments>
</comment>
<comment type="interaction">
    <interactant intactId="EBI-740744">
        <id>O95471</id>
    </interactant>
    <interactant intactId="EBI-2927498">
        <id>O60883</id>
        <label>GPR37L1</label>
    </interactant>
    <organismsDiffer>false</organismsDiffer>
    <experiments>3</experiments>
</comment>
<comment type="interaction">
    <interactant intactId="EBI-740744">
        <id>O95471</id>
    </interactant>
    <interactant intactId="EBI-720480">
        <id>P24593</id>
        <label>IGFBP5</label>
    </interactant>
    <organismsDiffer>false</organismsDiffer>
    <experiments>3</experiments>
</comment>
<comment type="interaction">
    <interactant intactId="EBI-740744">
        <id>O95471</id>
    </interactant>
    <interactant intactId="EBI-2431769">
        <id>O43736</id>
        <label>ITM2A</label>
    </interactant>
    <organismsDiffer>false</organismsDiffer>
    <experiments>3</experiments>
</comment>
<comment type="interaction">
    <interactant intactId="EBI-740744">
        <id>O95471</id>
    </interactant>
    <interactant intactId="EBI-10266796">
        <id>Q8N5M9</id>
        <label>JAGN1</label>
    </interactant>
    <organismsDiffer>false</organismsDiffer>
    <experiments>3</experiments>
</comment>
<comment type="interaction">
    <interactant intactId="EBI-740744">
        <id>O95471</id>
    </interactant>
    <interactant intactId="EBI-8070286">
        <id>O43561-2</id>
        <label>LAT</label>
    </interactant>
    <organismsDiffer>false</organismsDiffer>
    <experiments>3</experiments>
</comment>
<comment type="interaction">
    <interactant intactId="EBI-740744">
        <id>O95471</id>
    </interactant>
    <interactant intactId="EBI-750776">
        <id>O95214</id>
        <label>LEPROTL1</label>
    </interactant>
    <organismsDiffer>false</organismsDiffer>
    <experiments>3</experiments>
</comment>
<comment type="interaction">
    <interactant intactId="EBI-740744">
        <id>O95471</id>
    </interactant>
    <interactant intactId="EBI-12033434">
        <id>Q9UBY5</id>
        <label>LPAR3</label>
    </interactant>
    <organismsDiffer>false</organismsDiffer>
    <experiments>3</experiments>
</comment>
<comment type="interaction">
    <interactant intactId="EBI-740744">
        <id>O95471</id>
    </interactant>
    <interactant intactId="EBI-10264855">
        <id>Q8N112</id>
        <label>LSMEM2</label>
    </interactant>
    <organismsDiffer>false</organismsDiffer>
    <experiments>3</experiments>
</comment>
<comment type="interaction">
    <interactant intactId="EBI-740744">
        <id>O95471</id>
    </interactant>
    <interactant intactId="EBI-3932027">
        <id>P21145</id>
        <label>MAL</label>
    </interactant>
    <organismsDiffer>false</organismsDiffer>
    <experiments>3</experiments>
</comment>
<comment type="interaction">
    <interactant intactId="EBI-740744">
        <id>O95471</id>
    </interactant>
    <interactant intactId="EBI-750078">
        <id>Q13021</id>
        <label>MALL</label>
    </interactant>
    <organismsDiffer>false</organismsDiffer>
    <experiments>3</experiments>
</comment>
<comment type="interaction">
    <interactant intactId="EBI-740744">
        <id>O95471</id>
    </interactant>
    <interactant intactId="EBI-3920969">
        <id>Q6N075</id>
        <label>MFSD5</label>
    </interactant>
    <organismsDiffer>false</organismsDiffer>
    <experiments>3</experiments>
</comment>
<comment type="interaction">
    <interactant intactId="EBI-740744">
        <id>O95471</id>
    </interactant>
    <interactant intactId="EBI-12070086">
        <id>Q5J8X5</id>
        <label>MS4A13</label>
    </interactant>
    <organismsDiffer>false</organismsDiffer>
    <experiments>3</experiments>
</comment>
<comment type="interaction">
    <interactant intactId="EBI-740744">
        <id>O95471</id>
    </interactant>
    <interactant intactId="EBI-1246182">
        <id>Q9NX14</id>
        <label>NDUFB11</label>
    </interactant>
    <organismsDiffer>false</organismsDiffer>
    <experiments>3</experiments>
</comment>
<comment type="interaction">
    <interactant intactId="EBI-740744">
        <id>O95471</id>
    </interactant>
    <interactant intactId="EBI-9550165">
        <id>Q0D2K0</id>
        <label>NIPAL4</label>
    </interactant>
    <organismsDiffer>false</organismsDiffer>
    <experiments>3</experiments>
</comment>
<comment type="interaction">
    <interactant intactId="EBI-740744">
        <id>O95471</id>
    </interactant>
    <interactant intactId="EBI-3919611">
        <id>Q16617</id>
        <label>NKG7</label>
    </interactant>
    <organismsDiffer>false</organismsDiffer>
    <experiments>3</experiments>
</comment>
<comment type="interaction">
    <interactant intactId="EBI-740744">
        <id>O95471</id>
    </interactant>
    <interactant intactId="EBI-2804156">
        <id>Q6UX06</id>
        <label>OLFM4</label>
    </interactant>
    <organismsDiffer>false</organismsDiffer>
    <experiments>3</experiments>
</comment>
<comment type="interaction">
    <interactant intactId="EBI-740744">
        <id>O95471</id>
    </interactant>
    <interactant intactId="EBI-12092917">
        <id>Q9UHJ9-5</id>
        <label>PGAP2</label>
    </interactant>
    <organismsDiffer>false</organismsDiffer>
    <experiments>3</experiments>
</comment>
<comment type="interaction">
    <interactant intactId="EBI-740744">
        <id>O95471</id>
    </interactant>
    <interactant intactId="EBI-692836">
        <id>P26678</id>
        <label>PLN</label>
    </interactant>
    <organismsDiffer>false</organismsDiffer>
    <experiments>3</experiments>
</comment>
<comment type="interaction">
    <interactant intactId="EBI-740744">
        <id>O95471</id>
    </interactant>
    <interactant intactId="EBI-1052363">
        <id>Q9NS64</id>
        <label>RPRM</label>
    </interactant>
    <organismsDiffer>false</organismsDiffer>
    <experiments>3</experiments>
</comment>
<comment type="interaction">
    <interactant intactId="EBI-740744">
        <id>O95471</id>
    </interactant>
    <interactant intactId="EBI-10244780">
        <id>Q5QGT7</id>
        <label>RTP2</label>
    </interactant>
    <organismsDiffer>false</organismsDiffer>
    <experiments>3</experiments>
</comment>
<comment type="interaction">
    <interactant intactId="EBI-740744">
        <id>O95471</id>
    </interactant>
    <interactant intactId="EBI-4403649">
        <id>Q969E2</id>
        <label>SCAMP4</label>
    </interactant>
    <organismsDiffer>false</organismsDiffer>
    <experiments>3</experiments>
</comment>
<comment type="interaction">
    <interactant intactId="EBI-740744">
        <id>O95471</id>
    </interactant>
    <interactant intactId="EBI-12056025">
        <id>Q14162</id>
        <label>SCARF1</label>
    </interactant>
    <organismsDiffer>false</organismsDiffer>
    <experiments>3</experiments>
</comment>
<comment type="interaction">
    <interactant intactId="EBI-740744">
        <id>O95471</id>
    </interactant>
    <interactant intactId="EBI-1058865">
        <id>O75396</id>
        <label>SEC22B</label>
    </interactant>
    <organismsDiffer>false</organismsDiffer>
    <experiments>3</experiments>
</comment>
<comment type="interaction">
    <interactant intactId="EBI-740744">
        <id>O95471</id>
    </interactant>
    <interactant intactId="EBI-17284533">
        <id>A2A2V5</id>
        <label>SERTM1</label>
    </interactant>
    <organismsDiffer>false</organismsDiffer>
    <experiments>3</experiments>
</comment>
<comment type="interaction">
    <interactant intactId="EBI-740744">
        <id>O95471</id>
    </interactant>
    <interactant intactId="EBI-10314552">
        <id>Q9NVC3</id>
        <label>SLC38A7</label>
    </interactant>
    <organismsDiffer>false</organismsDiffer>
    <experiments>3</experiments>
</comment>
<comment type="interaction">
    <interactant intactId="EBI-740744">
        <id>O95471</id>
    </interactant>
    <interactant intactId="EBI-7131783">
        <id>Q8N205</id>
        <label>SYNE4</label>
    </interactant>
    <organismsDiffer>false</organismsDiffer>
    <experiments>3</experiments>
</comment>
<comment type="interaction">
    <interactant intactId="EBI-740744">
        <id>O95471</id>
    </interactant>
    <interactant intactId="EBI-8644968">
        <id>Q9NV29</id>
        <label>TMEM100</label>
    </interactant>
    <organismsDiffer>false</organismsDiffer>
    <experiments>3</experiments>
</comment>
<comment type="interaction">
    <interactant intactId="EBI-740744">
        <id>O95471</id>
    </interactant>
    <interactant intactId="EBI-723946">
        <id>P17152</id>
        <label>TMEM11</label>
    </interactant>
    <organismsDiffer>false</organismsDiffer>
    <experiments>3</experiments>
</comment>
<comment type="interaction">
    <interactant intactId="EBI-740744">
        <id>O95471</id>
    </interactant>
    <interactant intactId="EBI-10694905">
        <id>Q5BJH2-2</id>
        <label>TMEM128</label>
    </interactant>
    <organismsDiffer>false</organismsDiffer>
    <experiments>3</experiments>
</comment>
<comment type="interaction">
    <interactant intactId="EBI-740744">
        <id>O95471</id>
    </interactant>
    <interactant intactId="EBI-2844246">
        <id>Q9NV12</id>
        <label>TMEM140</label>
    </interactant>
    <organismsDiffer>false</organismsDiffer>
    <experiments>3</experiments>
</comment>
<comment type="interaction">
    <interactant intactId="EBI-740744">
        <id>O95471</id>
    </interactant>
    <interactant intactId="EBI-348587">
        <id>Q9BVK8</id>
        <label>TMEM147</label>
    </interactant>
    <organismsDiffer>false</organismsDiffer>
    <experiments>3</experiments>
</comment>
<comment type="interaction">
    <interactant intactId="EBI-740744">
        <id>O95471</id>
    </interactant>
    <interactant intactId="EBI-13076526">
        <id>Q2T9K0-2</id>
        <label>TMEM44</label>
    </interactant>
    <organismsDiffer>false</organismsDiffer>
    <experiments>3</experiments>
</comment>
<comment type="interaction">
    <interactant intactId="EBI-740744">
        <id>O95471</id>
    </interactant>
    <interactant intactId="EBI-2852148">
        <id>Q9H2L4</id>
        <label>TMEM60</label>
    </interactant>
    <organismsDiffer>false</organismsDiffer>
    <experiments>3</experiments>
</comment>
<comment type="interaction">
    <interactant intactId="EBI-740744">
        <id>O95471</id>
    </interactant>
    <interactant intactId="EBI-12111910">
        <id>Q5BJF2</id>
        <label>TMEM97</label>
    </interactant>
    <organismsDiffer>false</organismsDiffer>
    <experiments>3</experiments>
</comment>
<comment type="interaction">
    <interactant intactId="EBI-740744">
        <id>O95471</id>
    </interactant>
    <interactant intactId="EBI-359977">
        <id>P01375</id>
        <label>TNF</label>
    </interactant>
    <organismsDiffer>false</organismsDiffer>
    <experiments>3</experiments>
</comment>
<comment type="interaction">
    <interactant intactId="EBI-740744">
        <id>O95471</id>
    </interactant>
    <interactant intactId="EBI-12045841">
        <id>Q86UF1</id>
        <label>TSPAN33</label>
    </interactant>
    <organismsDiffer>false</organismsDiffer>
    <experiments>3</experiments>
</comment>
<comment type="interaction">
    <interactant intactId="EBI-740744">
        <id>O95471</id>
    </interactant>
    <interactant intactId="EBI-10243654">
        <id>Q5BVD1</id>
        <label>TTMP</label>
    </interactant>
    <organismsDiffer>false</organismsDiffer>
    <experiments>3</experiments>
</comment>
<comment type="interaction">
    <interactant intactId="EBI-740744">
        <id>O95471</id>
    </interactant>
    <interactant intactId="EBI-11988865">
        <id>A5PKU2</id>
        <label>TUSC5</label>
    </interactant>
    <organismsDiffer>false</organismsDiffer>
    <experiments>3</experiments>
</comment>
<comment type="interaction">
    <interactant intactId="EBI-740744">
        <id>O95471</id>
    </interactant>
    <interactant intactId="EBI-2819725">
        <id>Q9Y5Z9</id>
        <label>UBIAD1</label>
    </interactant>
    <organismsDiffer>false</organismsDiffer>
    <experiments>3</experiments>
</comment>
<comment type="interaction">
    <interactant intactId="EBI-740744">
        <id>O95471</id>
    </interactant>
    <interactant intactId="EBI-4401271">
        <id>Q9H1C4</id>
        <label>UNC93B1</label>
    </interactant>
    <organismsDiffer>false</organismsDiffer>
    <experiments>3</experiments>
</comment>
<comment type="interaction">
    <interactant intactId="EBI-740744">
        <id>O95471</id>
    </interactant>
    <interactant intactId="EBI-12237619">
        <id>O75841</id>
        <label>UPK1B</label>
    </interactant>
    <organismsDiffer>false</organismsDiffer>
    <experiments>3</experiments>
</comment>
<comment type="interaction">
    <interactant intactId="EBI-740744">
        <id>O95471</id>
    </interactant>
    <interactant intactId="EBI-10179682">
        <id>O00526</id>
        <label>UPK2</label>
    </interactant>
    <organismsDiffer>false</organismsDiffer>
    <experiments>3</experiments>
</comment>
<comment type="interaction">
    <interactant intactId="EBI-740744">
        <id>O95471</id>
    </interactant>
    <interactant intactId="EBI-722343">
        <id>Q15836</id>
        <label>VAMP3</label>
    </interactant>
    <organismsDiffer>false</organismsDiffer>
    <experiments>3</experiments>
</comment>
<comment type="interaction">
    <interactant intactId="EBI-740744">
        <id>O95471</id>
    </interactant>
    <interactant intactId="EBI-10191195">
        <id>O95183</id>
        <label>VAMP5</label>
    </interactant>
    <organismsDiffer>false</organismsDiffer>
    <experiments>3</experiments>
</comment>
<comment type="interaction">
    <interactant intactId="EBI-740744">
        <id>O95471</id>
    </interactant>
    <interactant intactId="EBI-12190699">
        <id>Q6UX27-3</id>
        <label>VSTM1</label>
    </interactant>
    <organismsDiffer>false</organismsDiffer>
    <experiments>3</experiments>
</comment>
<comment type="subcellular location">
    <subcellularLocation>
        <location evidence="4 5 9">Cell membrane</location>
        <topology evidence="3">Multi-pass membrane protein</topology>
    </subcellularLocation>
    <subcellularLocation>
        <location evidence="8">Basolateral cell membrane</location>
    </subcellularLocation>
    <subcellularLocation>
        <location evidence="8">Cell junction</location>
        <location evidence="8">Tight junction</location>
    </subcellularLocation>
    <text evidence="8">Co-localizes with EPCAM at the basolateral cell membrane and tight junction.</text>
</comment>
<comment type="alternative products">
    <event type="alternative splicing"/>
    <isoform>
        <id>O95471-1</id>
        <name>1</name>
        <sequence type="displayed"/>
    </isoform>
    <isoform>
        <id>O95471-2</id>
        <name>2</name>
        <name>t-CLDN-7</name>
        <sequence type="described" ref="VSP_013230"/>
    </isoform>
</comment>
<comment type="tissue specificity">
    <text evidence="4 5">Expressed in kidney, lung and prostate. Isoform 1 seems to be predominant, except in some normal prostate samples, where isoform 2 is the major form. Down-regulated in breast cancers, including ductal carcinoma in situ (DCIS), lobular carcinoma in situ (LCIS) and invasive ductal carcinoma (IDC) (at protein level), as well as in several cancer cell lines. Loss of expression correlates with histological grade, occurring predominantly in high-grade lesions.</text>
</comment>
<comment type="induction">
    <text evidence="5">By androgens.</text>
</comment>
<comment type="PTM">
    <text evidence="8">Phosphorylated.</text>
</comment>
<comment type="similarity">
    <text evidence="13">Belongs to the claudin family.</text>
</comment>
<comment type="sequence caution" evidence="13">
    <conflict type="frameshift">
        <sequence resource="EMBL-CDS" id="AAP97219"/>
    </conflict>
</comment>
<comment type="online information" name="Atlas of Genetics and Cytogenetics in Oncology and Haematology">
    <link uri="https://atlasgeneticsoncology.org/gene/40099/CLDN7"/>
</comment>
<protein>
    <recommendedName>
        <fullName>Claudin-7</fullName>
        <shortName>CLDN-7</shortName>
    </recommendedName>
</protein>